<comment type="alternative products">
    <event type="alternative splicing"/>
    <isoform>
        <id>A2AJB1-1</id>
        <name>1</name>
        <sequence type="displayed"/>
    </isoform>
    <isoform>
        <id>A2AJB1-2</id>
        <name>2</name>
        <sequence type="described" ref="VSP_026485 VSP_026486"/>
    </isoform>
</comment>
<proteinExistence type="evidence at transcript level"/>
<organism>
    <name type="scientific">Mus musculus</name>
    <name type="common">Mouse</name>
    <dbReference type="NCBI Taxonomy" id="10090"/>
    <lineage>
        <taxon>Eukaryota</taxon>
        <taxon>Metazoa</taxon>
        <taxon>Chordata</taxon>
        <taxon>Craniata</taxon>
        <taxon>Vertebrata</taxon>
        <taxon>Euteleostomi</taxon>
        <taxon>Mammalia</taxon>
        <taxon>Eutheria</taxon>
        <taxon>Euarchontoglires</taxon>
        <taxon>Glires</taxon>
        <taxon>Rodentia</taxon>
        <taxon>Myomorpha</taxon>
        <taxon>Muroidea</taxon>
        <taxon>Muridae</taxon>
        <taxon>Murinae</taxon>
        <taxon>Mus</taxon>
        <taxon>Mus</taxon>
    </lineage>
</organism>
<name>CC183_MOUSE</name>
<protein>
    <recommendedName>
        <fullName>Coiled-coil domain-containing protein 183</fullName>
    </recommendedName>
</protein>
<feature type="chain" id="PRO_0000293466" description="Coiled-coil domain-containing protein 183">
    <location>
        <begin position="1"/>
        <end position="534"/>
    </location>
</feature>
<feature type="coiled-coil region" evidence="1">
    <location>
        <begin position="10"/>
        <end position="54"/>
    </location>
</feature>
<feature type="coiled-coil region" evidence="1">
    <location>
        <begin position="136"/>
        <end position="209"/>
    </location>
</feature>
<feature type="coiled-coil region" evidence="1">
    <location>
        <begin position="321"/>
        <end position="406"/>
    </location>
</feature>
<feature type="splice variant" id="VSP_026485" description="In isoform 2." evidence="2">
    <location>
        <begin position="1"/>
        <end position="206"/>
    </location>
</feature>
<feature type="splice variant" id="VSP_026486" description="In isoform 2." evidence="2">
    <original>ETFQFADVDHSYVPSRAEIKKQAQQLIEAKLKGAKKKKK</original>
    <variation>GEALHAGHRKMEKDDKNNSCN</variation>
    <location>
        <begin position="496"/>
        <end position="534"/>
    </location>
</feature>
<gene>
    <name type="primary">Ccdc183</name>
    <name type="synonym">Kiaa1984</name>
</gene>
<keyword id="KW-0025">Alternative splicing</keyword>
<keyword id="KW-0175">Coiled coil</keyword>
<keyword id="KW-1185">Reference proteome</keyword>
<sequence>MKVHNEAAVEAQITELRTITRLQEQCRALQIQGVKEKTAQNKATMGILRSNLRRGAQDWALAKKHDQWTISKACGKDTSMRLAHGRSTLEVAREKLRKYVFDRVNTHNILIHLVRRRGQKLESLQLELASLRNQPDATKDELRQLQIIRQLENNIEKTVIKITTSQNIHTLYKVLLDYLKKVLAEYPTELDKLQNLVANYCSELSDMTVMSQDAMMITDEVKRNMRQGEATFIEERRARENRLNQQKKLIDKIHTKETSEKYRRGRRDLDFPSNLMTMENVKVKKRKTSVADIQYQTKVTTLVERVKSAVQCSHLWDIAGRFLAQKNTEENLELQMEDCEERRTQLEALMKKLELEEAVLKFHQTPSAVGFNSIQKKMKNMLEEEEARLKQAQNNMNKGQQLLLVIQTGIDNLYIRLIGITLPTFQKEIAVSNTLDVYGKLDYCEGKLIYLAERMQTLSRNEEVDTKVRDTLESSTLKEKHNTRITFEDPEEDMIETFQFADVDHSYVPSRAEIKKQAQQLIEAKLKGAKKKKK</sequence>
<reference key="1">
    <citation type="journal article" date="2005" name="Science">
        <title>The transcriptional landscape of the mammalian genome.</title>
        <authorList>
            <person name="Carninci P."/>
            <person name="Kasukawa T."/>
            <person name="Katayama S."/>
            <person name="Gough J."/>
            <person name="Frith M.C."/>
            <person name="Maeda N."/>
            <person name="Oyama R."/>
            <person name="Ravasi T."/>
            <person name="Lenhard B."/>
            <person name="Wells C."/>
            <person name="Kodzius R."/>
            <person name="Shimokawa K."/>
            <person name="Bajic V.B."/>
            <person name="Brenner S.E."/>
            <person name="Batalov S."/>
            <person name="Forrest A.R."/>
            <person name="Zavolan M."/>
            <person name="Davis M.J."/>
            <person name="Wilming L.G."/>
            <person name="Aidinis V."/>
            <person name="Allen J.E."/>
            <person name="Ambesi-Impiombato A."/>
            <person name="Apweiler R."/>
            <person name="Aturaliya R.N."/>
            <person name="Bailey T.L."/>
            <person name="Bansal M."/>
            <person name="Baxter L."/>
            <person name="Beisel K.W."/>
            <person name="Bersano T."/>
            <person name="Bono H."/>
            <person name="Chalk A.M."/>
            <person name="Chiu K.P."/>
            <person name="Choudhary V."/>
            <person name="Christoffels A."/>
            <person name="Clutterbuck D.R."/>
            <person name="Crowe M.L."/>
            <person name="Dalla E."/>
            <person name="Dalrymple B.P."/>
            <person name="de Bono B."/>
            <person name="Della Gatta G."/>
            <person name="di Bernardo D."/>
            <person name="Down T."/>
            <person name="Engstrom P."/>
            <person name="Fagiolini M."/>
            <person name="Faulkner G."/>
            <person name="Fletcher C.F."/>
            <person name="Fukushima T."/>
            <person name="Furuno M."/>
            <person name="Futaki S."/>
            <person name="Gariboldi M."/>
            <person name="Georgii-Hemming P."/>
            <person name="Gingeras T.R."/>
            <person name="Gojobori T."/>
            <person name="Green R.E."/>
            <person name="Gustincich S."/>
            <person name="Harbers M."/>
            <person name="Hayashi Y."/>
            <person name="Hensch T.K."/>
            <person name="Hirokawa N."/>
            <person name="Hill D."/>
            <person name="Huminiecki L."/>
            <person name="Iacono M."/>
            <person name="Ikeo K."/>
            <person name="Iwama A."/>
            <person name="Ishikawa T."/>
            <person name="Jakt M."/>
            <person name="Kanapin A."/>
            <person name="Katoh M."/>
            <person name="Kawasawa Y."/>
            <person name="Kelso J."/>
            <person name="Kitamura H."/>
            <person name="Kitano H."/>
            <person name="Kollias G."/>
            <person name="Krishnan S.P."/>
            <person name="Kruger A."/>
            <person name="Kummerfeld S.K."/>
            <person name="Kurochkin I.V."/>
            <person name="Lareau L.F."/>
            <person name="Lazarevic D."/>
            <person name="Lipovich L."/>
            <person name="Liu J."/>
            <person name="Liuni S."/>
            <person name="McWilliam S."/>
            <person name="Madan Babu M."/>
            <person name="Madera M."/>
            <person name="Marchionni L."/>
            <person name="Matsuda H."/>
            <person name="Matsuzawa S."/>
            <person name="Miki H."/>
            <person name="Mignone F."/>
            <person name="Miyake S."/>
            <person name="Morris K."/>
            <person name="Mottagui-Tabar S."/>
            <person name="Mulder N."/>
            <person name="Nakano N."/>
            <person name="Nakauchi H."/>
            <person name="Ng P."/>
            <person name="Nilsson R."/>
            <person name="Nishiguchi S."/>
            <person name="Nishikawa S."/>
            <person name="Nori F."/>
            <person name="Ohara O."/>
            <person name="Okazaki Y."/>
            <person name="Orlando V."/>
            <person name="Pang K.C."/>
            <person name="Pavan W.J."/>
            <person name="Pavesi G."/>
            <person name="Pesole G."/>
            <person name="Petrovsky N."/>
            <person name="Piazza S."/>
            <person name="Reed J."/>
            <person name="Reid J.F."/>
            <person name="Ring B.Z."/>
            <person name="Ringwald M."/>
            <person name="Rost B."/>
            <person name="Ruan Y."/>
            <person name="Salzberg S.L."/>
            <person name="Sandelin A."/>
            <person name="Schneider C."/>
            <person name="Schoenbach C."/>
            <person name="Sekiguchi K."/>
            <person name="Semple C.A."/>
            <person name="Seno S."/>
            <person name="Sessa L."/>
            <person name="Sheng Y."/>
            <person name="Shibata Y."/>
            <person name="Shimada H."/>
            <person name="Shimada K."/>
            <person name="Silva D."/>
            <person name="Sinclair B."/>
            <person name="Sperling S."/>
            <person name="Stupka E."/>
            <person name="Sugiura K."/>
            <person name="Sultana R."/>
            <person name="Takenaka Y."/>
            <person name="Taki K."/>
            <person name="Tammoja K."/>
            <person name="Tan S.L."/>
            <person name="Tang S."/>
            <person name="Taylor M.S."/>
            <person name="Tegner J."/>
            <person name="Teichmann S.A."/>
            <person name="Ueda H.R."/>
            <person name="van Nimwegen E."/>
            <person name="Verardo R."/>
            <person name="Wei C.L."/>
            <person name="Yagi K."/>
            <person name="Yamanishi H."/>
            <person name="Zabarovsky E."/>
            <person name="Zhu S."/>
            <person name="Zimmer A."/>
            <person name="Hide W."/>
            <person name="Bult C."/>
            <person name="Grimmond S.M."/>
            <person name="Teasdale R.D."/>
            <person name="Liu E.T."/>
            <person name="Brusic V."/>
            <person name="Quackenbush J."/>
            <person name="Wahlestedt C."/>
            <person name="Mattick J.S."/>
            <person name="Hume D.A."/>
            <person name="Kai C."/>
            <person name="Sasaki D."/>
            <person name="Tomaru Y."/>
            <person name="Fukuda S."/>
            <person name="Kanamori-Katayama M."/>
            <person name="Suzuki M."/>
            <person name="Aoki J."/>
            <person name="Arakawa T."/>
            <person name="Iida J."/>
            <person name="Imamura K."/>
            <person name="Itoh M."/>
            <person name="Kato T."/>
            <person name="Kawaji H."/>
            <person name="Kawagashira N."/>
            <person name="Kawashima T."/>
            <person name="Kojima M."/>
            <person name="Kondo S."/>
            <person name="Konno H."/>
            <person name="Nakano K."/>
            <person name="Ninomiya N."/>
            <person name="Nishio T."/>
            <person name="Okada M."/>
            <person name="Plessy C."/>
            <person name="Shibata K."/>
            <person name="Shiraki T."/>
            <person name="Suzuki S."/>
            <person name="Tagami M."/>
            <person name="Waki K."/>
            <person name="Watahiki A."/>
            <person name="Okamura-Oho Y."/>
            <person name="Suzuki H."/>
            <person name="Kawai J."/>
            <person name="Hayashizaki Y."/>
        </authorList>
    </citation>
    <scope>NUCLEOTIDE SEQUENCE [LARGE SCALE MRNA] (ISOFORM 2)</scope>
    <source>
        <strain>C57BL/6J</strain>
        <tissue>Testis</tissue>
    </source>
</reference>
<reference key="2">
    <citation type="journal article" date="2009" name="PLoS Biol.">
        <title>Lineage-specific biology revealed by a finished genome assembly of the mouse.</title>
        <authorList>
            <person name="Church D.M."/>
            <person name="Goodstadt L."/>
            <person name="Hillier L.W."/>
            <person name="Zody M.C."/>
            <person name="Goldstein S."/>
            <person name="She X."/>
            <person name="Bult C.J."/>
            <person name="Agarwala R."/>
            <person name="Cherry J.L."/>
            <person name="DiCuccio M."/>
            <person name="Hlavina W."/>
            <person name="Kapustin Y."/>
            <person name="Meric P."/>
            <person name="Maglott D."/>
            <person name="Birtle Z."/>
            <person name="Marques A.C."/>
            <person name="Graves T."/>
            <person name="Zhou S."/>
            <person name="Teague B."/>
            <person name="Potamousis K."/>
            <person name="Churas C."/>
            <person name="Place M."/>
            <person name="Herschleb J."/>
            <person name="Runnheim R."/>
            <person name="Forrest D."/>
            <person name="Amos-Landgraf J."/>
            <person name="Schwartz D.C."/>
            <person name="Cheng Z."/>
            <person name="Lindblad-Toh K."/>
            <person name="Eichler E.E."/>
            <person name="Ponting C.P."/>
        </authorList>
    </citation>
    <scope>NUCLEOTIDE SEQUENCE [LARGE SCALE GENOMIC DNA]</scope>
    <source>
        <strain>C57BL/6J</strain>
    </source>
</reference>
<evidence type="ECO:0000255" key="1"/>
<evidence type="ECO:0000303" key="2">
    <source>
    </source>
</evidence>
<accession>A2AJB1</accession>
<accession>Q9D5S3</accession>
<dbReference type="EMBL" id="AK014983">
    <property type="protein sequence ID" value="BAB29653.1"/>
    <property type="molecule type" value="mRNA"/>
</dbReference>
<dbReference type="EMBL" id="AL732590">
    <property type="status" value="NOT_ANNOTATED_CDS"/>
    <property type="molecule type" value="Genomic_DNA"/>
</dbReference>
<dbReference type="CCDS" id="CCDS50533.1">
    <molecule id="A2AJB1-1"/>
</dbReference>
<dbReference type="RefSeq" id="NP_084135.1">
    <molecule id="A2AJB1-1"/>
    <property type="nucleotide sequence ID" value="NM_029859.1"/>
</dbReference>
<dbReference type="SMR" id="A2AJB1"/>
<dbReference type="FunCoup" id="A2AJB1">
    <property type="interactions" value="7"/>
</dbReference>
<dbReference type="STRING" id="10090.ENSMUSP00000028309"/>
<dbReference type="iPTMnet" id="A2AJB1"/>
<dbReference type="PhosphoSitePlus" id="A2AJB1"/>
<dbReference type="PaxDb" id="10090-ENSMUSP00000028309"/>
<dbReference type="ProteomicsDB" id="283718">
    <molecule id="A2AJB1-1"/>
</dbReference>
<dbReference type="ProteomicsDB" id="283719">
    <molecule id="A2AJB1-2"/>
</dbReference>
<dbReference type="Ensembl" id="ENSMUST00000028309.4">
    <molecule id="A2AJB1-1"/>
    <property type="protein sequence ID" value="ENSMUSP00000028309.4"/>
    <property type="gene ID" value="ENSMUSG00000026940.4"/>
</dbReference>
<dbReference type="GeneID" id="77058"/>
<dbReference type="KEGG" id="mmu:77058"/>
<dbReference type="UCSC" id="uc008isv.2">
    <molecule id="A2AJB1-2"/>
    <property type="organism name" value="mouse"/>
</dbReference>
<dbReference type="UCSC" id="uc012bsc.1">
    <molecule id="A2AJB1-1"/>
    <property type="organism name" value="mouse"/>
</dbReference>
<dbReference type="AGR" id="MGI:1924308"/>
<dbReference type="CTD" id="84960"/>
<dbReference type="MGI" id="MGI:1924308">
    <property type="gene designation" value="Ccdc183"/>
</dbReference>
<dbReference type="VEuPathDB" id="HostDB:ENSMUSG00000026940"/>
<dbReference type="eggNOG" id="ENOG502QTFP">
    <property type="taxonomic scope" value="Eukaryota"/>
</dbReference>
<dbReference type="GeneTree" id="ENSGT00940000153116"/>
<dbReference type="HOGENOM" id="CLU_575639_0_0_1"/>
<dbReference type="InParanoid" id="A2AJB1"/>
<dbReference type="OMA" id="RRGAHEW"/>
<dbReference type="OrthoDB" id="10255247at2759"/>
<dbReference type="PhylomeDB" id="A2AJB1"/>
<dbReference type="TreeFam" id="TF324955"/>
<dbReference type="BioGRID-ORCS" id="77058">
    <property type="hits" value="0 hits in 78 CRISPR screens"/>
</dbReference>
<dbReference type="PRO" id="PR:A2AJB1"/>
<dbReference type="Proteomes" id="UP000000589">
    <property type="component" value="Chromosome 2"/>
</dbReference>
<dbReference type="RNAct" id="A2AJB1">
    <property type="molecule type" value="protein"/>
</dbReference>
<dbReference type="Bgee" id="ENSMUSG00000026940">
    <property type="expression patterns" value="Expressed in spermatid and 51 other cell types or tissues"/>
</dbReference>
<dbReference type="InterPro" id="IPR043247">
    <property type="entry name" value="CCDC183"/>
</dbReference>
<dbReference type="PANTHER" id="PTHR47115">
    <property type="entry name" value="COILED-COIL DOMAIN-CONTAINING PROTEIN 183"/>
    <property type="match status" value="1"/>
</dbReference>
<dbReference type="PANTHER" id="PTHR47115:SF1">
    <property type="entry name" value="COILED-COIL DOMAIN-CONTAINING PROTEIN 183"/>
    <property type="match status" value="1"/>
</dbReference>